<sequence length="500" mass="56821">MSPGLLLLGSAVLLAFGLCCTFVHRARSRYEHIPGPPRPSFLLGHLPCFWKKDEVGGRVLQDVFLDWAKKYGPVVRVNVFHKTSVIVTSPESVKKFLMSTKYNKDSKMYRALQTVFGERLFGQGLVSECNYERWHKQRRVIDLAFSRSSLVSLMETFNEKAEQLVEILEAKADGQTPVSMQDMLTYTAMDILAKAAFGMETSMLLGAQKPLSQAVKLMLEGITASRNTLAKFLPGKRKQLREVRESIRFLRQVGRDWVQRRREALKRGEEVPADILTQILKAEEGAQDDEGLLDNFVTFFIAGHETSANHLAFTVMELSRQPEIVARLQAEVDEVIGSKRYLDFEDLGRLQYLSQVLKESLRLYPPAWGTFRLLEEETLIDGVRVPGNTPLLFSTYVMGRMDTYFEDPLTFNPDRFGPGAPKPRFTYFPFSLGHRSCIGQQFAQMEVKVVMAKLLQRLEFRLVPGQRFGLQEQATLKPLDPVLCTLRPRGWQPAPPPPPC</sequence>
<comment type="function">
    <text evidence="1 3 4 5 6 7 9 10">P450 monooxygenase that plays a major role in cholesterol homeostasis in the brain. Primarily catalyzes the hydroxylation (with S stereochemistry) at C-24 of cholesterol side chain, triggering cholesterol diffusion out of neurons and its further degradation (PubMed:10377398, PubMed:14640697, PubMed:18621681, PubMed:25017465). By promoting constant cholesterol elimination in neurons, may activate the mevalonate pathway and coordinate the synthesis of new cholesterol and nonsterol isoprenoids involved in synaptic activity and learning (By similarity). Further hydroxylates cholesterol derivatives and hormone steroids on both the ring and side chain of these molecules, converting them into active oxysterols involved in lipid signaling and biosynthesis (PubMed:12077124, PubMed:14640697, PubMed:28190002). Acts as an epoxidase converting cholesta-5,24-dien-3beta-ol/desmosterol into (24S),25-epoxycholesterol, an abundant lipid ligand of nuclear NR1H2 and NR1H3 receptors shown to promote neurogenesis in developing brain (PubMed:25017465). May also catalyze the oxidative metabolism of xenobiotics, such as clotrimazole (PubMed:20667828).</text>
</comment>
<comment type="catalytic activity">
    <reaction evidence="3 5 6 9">
        <text>cholesterol + reduced [NADPH--hemoprotein reductase] + O2 = (24S)-hydroxycholesterol + oxidized [NADPH--hemoprotein reductase] + H2O + H(+)</text>
        <dbReference type="Rhea" id="RHEA:22716"/>
        <dbReference type="Rhea" id="RHEA-COMP:11964"/>
        <dbReference type="Rhea" id="RHEA-COMP:11965"/>
        <dbReference type="ChEBI" id="CHEBI:15377"/>
        <dbReference type="ChEBI" id="CHEBI:15378"/>
        <dbReference type="ChEBI" id="CHEBI:15379"/>
        <dbReference type="ChEBI" id="CHEBI:16113"/>
        <dbReference type="ChEBI" id="CHEBI:34310"/>
        <dbReference type="ChEBI" id="CHEBI:57618"/>
        <dbReference type="ChEBI" id="CHEBI:58210"/>
        <dbReference type="EC" id="1.14.14.25"/>
    </reaction>
    <physiologicalReaction direction="left-to-right" evidence="1">
        <dbReference type="Rhea" id="RHEA:22717"/>
    </physiologicalReaction>
</comment>
<comment type="catalytic activity">
    <reaction evidence="10">
        <text>cholestanol + reduced [NADPH--hemoprotein reductase] + O2 = (24S)-hydroxycholestanol + oxidized [NADPH--hemoprotein reductase] + H2O + H(+)</text>
        <dbReference type="Rhea" id="RHEA:53808"/>
        <dbReference type="Rhea" id="RHEA-COMP:11964"/>
        <dbReference type="Rhea" id="RHEA-COMP:11965"/>
        <dbReference type="ChEBI" id="CHEBI:15377"/>
        <dbReference type="ChEBI" id="CHEBI:15378"/>
        <dbReference type="ChEBI" id="CHEBI:15379"/>
        <dbReference type="ChEBI" id="CHEBI:57618"/>
        <dbReference type="ChEBI" id="CHEBI:58210"/>
        <dbReference type="ChEBI" id="CHEBI:86570"/>
        <dbReference type="ChEBI" id="CHEBI:137687"/>
    </reaction>
    <physiologicalReaction direction="left-to-right" evidence="1">
        <dbReference type="Rhea" id="RHEA:53809"/>
    </physiologicalReaction>
</comment>
<comment type="catalytic activity">
    <reaction evidence="9">
        <text>7-dehydrocholesterol + reduced [NADPH--hemoprotein reductase] + O2 = cholesta-5,7-dien-3beta,24S-diol + oxidized [NADPH--hemoprotein reductase] + H2O + H(+)</text>
        <dbReference type="Rhea" id="RHEA:53244"/>
        <dbReference type="Rhea" id="RHEA-COMP:11964"/>
        <dbReference type="Rhea" id="RHEA-COMP:11965"/>
        <dbReference type="ChEBI" id="CHEBI:15377"/>
        <dbReference type="ChEBI" id="CHEBI:15378"/>
        <dbReference type="ChEBI" id="CHEBI:15379"/>
        <dbReference type="ChEBI" id="CHEBI:17759"/>
        <dbReference type="ChEBI" id="CHEBI:57618"/>
        <dbReference type="ChEBI" id="CHEBI:58210"/>
        <dbReference type="ChEBI" id="CHEBI:137061"/>
    </reaction>
    <physiologicalReaction direction="left-to-right" evidence="15">
        <dbReference type="Rhea" id="RHEA:53245"/>
    </physiologicalReaction>
</comment>
<comment type="catalytic activity">
    <reaction evidence="9">
        <text>7-dehydrocholesterol + reduced [NADPH--hemoprotein reductase] + O2 = cholesta-5,7-dien-3beta,25-diol + oxidized [NADPH--hemoprotein reductase] + H2O + H(+)</text>
        <dbReference type="Rhea" id="RHEA:53240"/>
        <dbReference type="Rhea" id="RHEA-COMP:11964"/>
        <dbReference type="Rhea" id="RHEA-COMP:11965"/>
        <dbReference type="ChEBI" id="CHEBI:15377"/>
        <dbReference type="ChEBI" id="CHEBI:15378"/>
        <dbReference type="ChEBI" id="CHEBI:15379"/>
        <dbReference type="ChEBI" id="CHEBI:17759"/>
        <dbReference type="ChEBI" id="CHEBI:57618"/>
        <dbReference type="ChEBI" id="CHEBI:58210"/>
        <dbReference type="ChEBI" id="CHEBI:137057"/>
    </reaction>
    <physiologicalReaction direction="left-to-right" evidence="15">
        <dbReference type="Rhea" id="RHEA:53241"/>
    </physiologicalReaction>
</comment>
<comment type="catalytic activity">
    <reaction evidence="9">
        <text>desmosterol + reduced [NADPH--hemoprotein reductase] + O2 = (24Z),26-hydroxydesmosterol + oxidized [NADPH--hemoprotein reductase] + H2O + H(+)</text>
        <dbReference type="Rhea" id="RHEA:53236"/>
        <dbReference type="Rhea" id="RHEA-COMP:11964"/>
        <dbReference type="Rhea" id="RHEA-COMP:11965"/>
        <dbReference type="ChEBI" id="CHEBI:15377"/>
        <dbReference type="ChEBI" id="CHEBI:15378"/>
        <dbReference type="ChEBI" id="CHEBI:15379"/>
        <dbReference type="ChEBI" id="CHEBI:17737"/>
        <dbReference type="ChEBI" id="CHEBI:57618"/>
        <dbReference type="ChEBI" id="CHEBI:58210"/>
        <dbReference type="ChEBI" id="CHEBI:137053"/>
    </reaction>
    <physiologicalReaction direction="left-to-right" evidence="15">
        <dbReference type="Rhea" id="RHEA:53237"/>
    </physiologicalReaction>
</comment>
<comment type="catalytic activity">
    <reaction evidence="9">
        <text>desmosterol + reduced [NADPH--hemoprotein reductase] + O2 = (24S)-25-epoxycholesterol + oxidized [NADPH--hemoprotein reductase] + H2O + H(+)</text>
        <dbReference type="Rhea" id="RHEA:53232"/>
        <dbReference type="Rhea" id="RHEA-COMP:11964"/>
        <dbReference type="Rhea" id="RHEA-COMP:11965"/>
        <dbReference type="ChEBI" id="CHEBI:15377"/>
        <dbReference type="ChEBI" id="CHEBI:15378"/>
        <dbReference type="ChEBI" id="CHEBI:15379"/>
        <dbReference type="ChEBI" id="CHEBI:17737"/>
        <dbReference type="ChEBI" id="CHEBI:41633"/>
        <dbReference type="ChEBI" id="CHEBI:57618"/>
        <dbReference type="ChEBI" id="CHEBI:58210"/>
    </reaction>
    <physiologicalReaction direction="left-to-right" evidence="15">
        <dbReference type="Rhea" id="RHEA:53233"/>
    </physiologicalReaction>
</comment>
<comment type="catalytic activity">
    <reaction evidence="4">
        <text>4beta-hydroxycholesterol + reduced [NADPH--hemoprotein reductase] + O2 = 4beta,24S-dihydroxycholesterol + oxidized [NADPH--hemoprotein reductase] + H2O + H(+)</text>
        <dbReference type="Rhea" id="RHEA:46392"/>
        <dbReference type="Rhea" id="RHEA-COMP:11964"/>
        <dbReference type="Rhea" id="RHEA-COMP:11965"/>
        <dbReference type="ChEBI" id="CHEBI:15377"/>
        <dbReference type="ChEBI" id="CHEBI:15378"/>
        <dbReference type="ChEBI" id="CHEBI:15379"/>
        <dbReference type="ChEBI" id="CHEBI:57618"/>
        <dbReference type="ChEBI" id="CHEBI:58210"/>
        <dbReference type="ChEBI" id="CHEBI:85778"/>
        <dbReference type="ChEBI" id="CHEBI:86087"/>
    </reaction>
    <physiologicalReaction direction="left-to-right" evidence="15">
        <dbReference type="Rhea" id="RHEA:46393"/>
    </physiologicalReaction>
</comment>
<comment type="catalytic activity">
    <reaction evidence="5">
        <text>(24S)-hydroxycholesterol + reduced [NADPH--hemoprotein reductase] + O2 = (24S,25R)-24,26-dihydroxycholesterol + oxidized [NADPH--hemoprotein reductase] + H2O + H(+)</text>
        <dbReference type="Rhea" id="RHEA:46388"/>
        <dbReference type="Rhea" id="RHEA-COMP:11964"/>
        <dbReference type="Rhea" id="RHEA-COMP:11965"/>
        <dbReference type="ChEBI" id="CHEBI:15377"/>
        <dbReference type="ChEBI" id="CHEBI:15378"/>
        <dbReference type="ChEBI" id="CHEBI:15379"/>
        <dbReference type="ChEBI" id="CHEBI:34310"/>
        <dbReference type="ChEBI" id="CHEBI:57618"/>
        <dbReference type="ChEBI" id="CHEBI:58210"/>
        <dbReference type="ChEBI" id="CHEBI:86165"/>
    </reaction>
    <physiologicalReaction direction="left-to-right" evidence="15">
        <dbReference type="Rhea" id="RHEA:46389"/>
    </physiologicalReaction>
</comment>
<comment type="catalytic activity">
    <reaction evidence="5 6">
        <text>(24S)-hydroxycholesterol + reduced [NADPH--hemoprotein reductase] + O2 = 24S,25-dihydroxycholesterol + oxidized [NADPH--hemoprotein reductase] + H2O + H(+)</text>
        <dbReference type="Rhea" id="RHEA:46384"/>
        <dbReference type="Rhea" id="RHEA-COMP:11964"/>
        <dbReference type="Rhea" id="RHEA-COMP:11965"/>
        <dbReference type="ChEBI" id="CHEBI:15377"/>
        <dbReference type="ChEBI" id="CHEBI:15378"/>
        <dbReference type="ChEBI" id="CHEBI:15379"/>
        <dbReference type="ChEBI" id="CHEBI:34310"/>
        <dbReference type="ChEBI" id="CHEBI:57618"/>
        <dbReference type="ChEBI" id="CHEBI:58210"/>
        <dbReference type="ChEBI" id="CHEBI:86074"/>
    </reaction>
    <physiologicalReaction direction="left-to-right" evidence="15">
        <dbReference type="Rhea" id="RHEA:46385"/>
    </physiologicalReaction>
</comment>
<comment type="catalytic activity">
    <reaction evidence="5">
        <text>7alpha-hydroxycholesterol + reduced [NADPH--hemoprotein reductase] + O2 = (24S)-7alpha-dihydroxycholesterol + oxidized [NADPH--hemoprotein reductase] + H2O + H(+)</text>
        <dbReference type="Rhea" id="RHEA:46380"/>
        <dbReference type="Rhea" id="RHEA-COMP:11964"/>
        <dbReference type="Rhea" id="RHEA-COMP:11965"/>
        <dbReference type="ChEBI" id="CHEBI:15377"/>
        <dbReference type="ChEBI" id="CHEBI:15378"/>
        <dbReference type="ChEBI" id="CHEBI:15379"/>
        <dbReference type="ChEBI" id="CHEBI:17500"/>
        <dbReference type="ChEBI" id="CHEBI:37640"/>
        <dbReference type="ChEBI" id="CHEBI:57618"/>
        <dbReference type="ChEBI" id="CHEBI:58210"/>
    </reaction>
    <physiologicalReaction direction="left-to-right" evidence="15">
        <dbReference type="Rhea" id="RHEA:46381"/>
    </physiologicalReaction>
</comment>
<comment type="catalytic activity">
    <reaction evidence="5">
        <text>progesterone + reduced [NADPH--hemoprotein reductase] + O2 = 17alpha-hydroxyprogesterone + oxidized [NADPH--hemoprotein reductase] + H2O + H(+)</text>
        <dbReference type="Rhea" id="RHEA:46308"/>
        <dbReference type="Rhea" id="RHEA-COMP:11964"/>
        <dbReference type="Rhea" id="RHEA-COMP:11965"/>
        <dbReference type="ChEBI" id="CHEBI:15377"/>
        <dbReference type="ChEBI" id="CHEBI:15378"/>
        <dbReference type="ChEBI" id="CHEBI:15379"/>
        <dbReference type="ChEBI" id="CHEBI:17026"/>
        <dbReference type="ChEBI" id="CHEBI:17252"/>
        <dbReference type="ChEBI" id="CHEBI:57618"/>
        <dbReference type="ChEBI" id="CHEBI:58210"/>
    </reaction>
    <physiologicalReaction direction="left-to-right" evidence="15">
        <dbReference type="Rhea" id="RHEA:46309"/>
    </physiologicalReaction>
</comment>
<comment type="catalytic activity">
    <reaction evidence="5">
        <text>testosterone + reduced [NADPH--hemoprotein reductase] + O2 = 16beta,17beta-dihydroxyandrost-4-en-3-one + oxidized [NADPH--hemoprotein reductase] + H2O + H(+)</text>
        <dbReference type="Rhea" id="RHEA:46304"/>
        <dbReference type="Rhea" id="RHEA-COMP:11964"/>
        <dbReference type="Rhea" id="RHEA-COMP:11965"/>
        <dbReference type="ChEBI" id="CHEBI:15377"/>
        <dbReference type="ChEBI" id="CHEBI:15378"/>
        <dbReference type="ChEBI" id="CHEBI:15379"/>
        <dbReference type="ChEBI" id="CHEBI:17347"/>
        <dbReference type="ChEBI" id="CHEBI:57618"/>
        <dbReference type="ChEBI" id="CHEBI:58210"/>
        <dbReference type="ChEBI" id="CHEBI:83027"/>
    </reaction>
    <physiologicalReaction direction="left-to-right" evidence="15">
        <dbReference type="Rhea" id="RHEA:46305"/>
    </physiologicalReaction>
</comment>
<comment type="catalytic activity">
    <reaction evidence="5">
        <text>testosterone + reduced [NADPH--hemoprotein reductase] + O2 = 2-hydroxytestosterone + oxidized [NADPH--hemoprotein reductase] + H2O + H(+)</text>
        <dbReference type="Rhea" id="RHEA:46300"/>
        <dbReference type="Rhea" id="RHEA-COMP:11964"/>
        <dbReference type="Rhea" id="RHEA-COMP:11965"/>
        <dbReference type="ChEBI" id="CHEBI:15377"/>
        <dbReference type="ChEBI" id="CHEBI:15378"/>
        <dbReference type="ChEBI" id="CHEBI:15379"/>
        <dbReference type="ChEBI" id="CHEBI:17347"/>
        <dbReference type="ChEBI" id="CHEBI:57618"/>
        <dbReference type="ChEBI" id="CHEBI:58210"/>
        <dbReference type="ChEBI" id="CHEBI:86013"/>
    </reaction>
    <physiologicalReaction direction="left-to-right" evidence="15">
        <dbReference type="Rhea" id="RHEA:46301"/>
    </physiologicalReaction>
</comment>
<comment type="catalytic activity">
    <reaction evidence="5">
        <text>testosterone + reduced [NADPH--hemoprotein reductase] + O2 = 6beta,17beta-dihydroxyandrost-4-en-3-one + oxidized [NADPH--hemoprotein reductase] + H2O + H(+)</text>
        <dbReference type="Rhea" id="RHEA:46296"/>
        <dbReference type="Rhea" id="RHEA-COMP:11964"/>
        <dbReference type="Rhea" id="RHEA-COMP:11965"/>
        <dbReference type="ChEBI" id="CHEBI:15377"/>
        <dbReference type="ChEBI" id="CHEBI:15378"/>
        <dbReference type="ChEBI" id="CHEBI:15379"/>
        <dbReference type="ChEBI" id="CHEBI:17347"/>
        <dbReference type="ChEBI" id="CHEBI:34477"/>
        <dbReference type="ChEBI" id="CHEBI:57618"/>
        <dbReference type="ChEBI" id="CHEBI:58210"/>
    </reaction>
    <physiologicalReaction direction="left-to-right" evidence="15">
        <dbReference type="Rhea" id="RHEA:46297"/>
    </physiologicalReaction>
</comment>
<comment type="cofactor">
    <cofactor evidence="6 7 8">
        <name>heme</name>
        <dbReference type="ChEBI" id="CHEBI:30413"/>
    </cofactor>
</comment>
<comment type="biophysicochemical properties">
    <kinetics>
        <KM evidence="5">2.2 uM for 24(S)-hydroxycholesterol</KM>
        <KM evidence="9">7 uM for cholesterol</KM>
        <KM evidence="9">2.8 uM for cholesta-5,7-dien-3beta-ol/7-dehydrocholesterol</KM>
        <KM evidence="9">9.4 uM for cholesta-5,24-dien-3beta-ol/desmosterol</KM>
        <text evidence="9">kcat/KM=8.4 mM/min for cholesterol, kcat/KM=8.5 mM/min for cholesta-5,7-dien-3beta-ol/7-dehydrocholesterol and kcat/KM=3.5 mM/min for cholesta-5,24-dien-3beta-ol/desmosterol.</text>
    </kinetics>
</comment>
<comment type="pathway">
    <text evidence="16">Steroid metabolism; cholesterol degradation.</text>
</comment>
<comment type="pathway">
    <text evidence="16">Lipid metabolism; C21-steroid hormone metabolism.</text>
</comment>
<comment type="subcellular location">
    <subcellularLocation>
        <location evidence="1">Endoplasmic reticulum membrane</location>
        <topology evidence="1">Single-pass membrane protein</topology>
    </subcellularLocation>
    <subcellularLocation>
        <location evidence="1">Microsome membrane</location>
        <topology evidence="1">Single-pass membrane protein</topology>
    </subcellularLocation>
    <subcellularLocation>
        <location evidence="1">Postsynapse</location>
    </subcellularLocation>
    <subcellularLocation>
        <location evidence="1">Presynapse</location>
    </subcellularLocation>
    <subcellularLocation>
        <location evidence="1">Cell projection</location>
        <location evidence="1">Dendrite</location>
    </subcellularLocation>
</comment>
<comment type="alternative products">
    <event type="alternative splicing"/>
    <isoform>
        <id>Q9Y6A2-1</id>
        <name>1</name>
        <sequence type="displayed"/>
    </isoform>
    <isoform>
        <id>Q9Y6A2-2</id>
        <name>2</name>
        <sequence type="described" ref="VSP_053859"/>
    </isoform>
    <isoform>
        <id>Q9Y6A2-3</id>
        <name>3</name>
        <sequence type="described" ref="VSP_053858 VSP_053860"/>
    </isoform>
</comment>
<comment type="tissue specificity">
    <text evidence="3">Expressed in brain. The mRNA was broadly distributed with higher levels in gray matter zones and lower levels in regions rich in white matter. Not detected in fetal sample but its expression increases linearly with age.</text>
</comment>
<comment type="similarity">
    <text evidence="15">Belongs to the cytochrome P450 family.</text>
</comment>
<keyword id="KW-0002">3D-structure</keyword>
<keyword id="KW-0025">Alternative splicing</keyword>
<keyword id="KW-0966">Cell projection</keyword>
<keyword id="KW-0153">Cholesterol metabolism</keyword>
<keyword id="KW-0256">Endoplasmic reticulum</keyword>
<keyword id="KW-0349">Heme</keyword>
<keyword id="KW-0408">Iron</keyword>
<keyword id="KW-0443">Lipid metabolism</keyword>
<keyword id="KW-0472">Membrane</keyword>
<keyword id="KW-0479">Metal-binding</keyword>
<keyword id="KW-0492">Microsome</keyword>
<keyword id="KW-0503">Monooxygenase</keyword>
<keyword id="KW-0560">Oxidoreductase</keyword>
<keyword id="KW-1267">Proteomics identification</keyword>
<keyword id="KW-1185">Reference proteome</keyword>
<keyword id="KW-0753">Steroid metabolism</keyword>
<keyword id="KW-1207">Sterol metabolism</keyword>
<keyword id="KW-0770">Synapse</keyword>
<keyword id="KW-0812">Transmembrane</keyword>
<keyword id="KW-1133">Transmembrane helix</keyword>
<organism>
    <name type="scientific">Homo sapiens</name>
    <name type="common">Human</name>
    <dbReference type="NCBI Taxonomy" id="9606"/>
    <lineage>
        <taxon>Eukaryota</taxon>
        <taxon>Metazoa</taxon>
        <taxon>Chordata</taxon>
        <taxon>Craniata</taxon>
        <taxon>Vertebrata</taxon>
        <taxon>Euteleostomi</taxon>
        <taxon>Mammalia</taxon>
        <taxon>Eutheria</taxon>
        <taxon>Euarchontoglires</taxon>
        <taxon>Primates</taxon>
        <taxon>Haplorrhini</taxon>
        <taxon>Catarrhini</taxon>
        <taxon>Hominidae</taxon>
        <taxon>Homo</taxon>
    </lineage>
</organism>
<gene>
    <name evidence="14 17" type="primary">CYP46A1</name>
    <name type="synonym">CYP46</name>
</gene>
<reference key="1">
    <citation type="journal article" date="1999" name="Proc. Natl. Acad. Sci. U.S.A.">
        <title>cDNA cloning of cholesterol 24-hydroxylase, a mediator of cholesterol homeostasis in the brain.</title>
        <authorList>
            <person name="Lund E.G."/>
            <person name="Guileyardo J.M."/>
            <person name="Russell D.W."/>
        </authorList>
    </citation>
    <scope>NUCLEOTIDE SEQUENCE [MRNA] (ISOFORM 1)</scope>
    <scope>FUNCTION</scope>
    <scope>CATALYTIC ACTIVITY</scope>
    <scope>TISSUE SPECIFICITY</scope>
    <source>
        <tissue>Fetal brain</tissue>
    </source>
</reference>
<reference key="2">
    <citation type="journal article" date="2004" name="Nat. Genet.">
        <title>Complete sequencing and characterization of 21,243 full-length human cDNAs.</title>
        <authorList>
            <person name="Ota T."/>
            <person name="Suzuki Y."/>
            <person name="Nishikawa T."/>
            <person name="Otsuki T."/>
            <person name="Sugiyama T."/>
            <person name="Irie R."/>
            <person name="Wakamatsu A."/>
            <person name="Hayashi K."/>
            <person name="Sato H."/>
            <person name="Nagai K."/>
            <person name="Kimura K."/>
            <person name="Makita H."/>
            <person name="Sekine M."/>
            <person name="Obayashi M."/>
            <person name="Nishi T."/>
            <person name="Shibahara T."/>
            <person name="Tanaka T."/>
            <person name="Ishii S."/>
            <person name="Yamamoto J."/>
            <person name="Saito K."/>
            <person name="Kawai Y."/>
            <person name="Isono Y."/>
            <person name="Nakamura Y."/>
            <person name="Nagahari K."/>
            <person name="Murakami K."/>
            <person name="Yasuda T."/>
            <person name="Iwayanagi T."/>
            <person name="Wagatsuma M."/>
            <person name="Shiratori A."/>
            <person name="Sudo H."/>
            <person name="Hosoiri T."/>
            <person name="Kaku Y."/>
            <person name="Kodaira H."/>
            <person name="Kondo H."/>
            <person name="Sugawara M."/>
            <person name="Takahashi M."/>
            <person name="Kanda K."/>
            <person name="Yokoi T."/>
            <person name="Furuya T."/>
            <person name="Kikkawa E."/>
            <person name="Omura Y."/>
            <person name="Abe K."/>
            <person name="Kamihara K."/>
            <person name="Katsuta N."/>
            <person name="Sato K."/>
            <person name="Tanikawa M."/>
            <person name="Yamazaki M."/>
            <person name="Ninomiya K."/>
            <person name="Ishibashi T."/>
            <person name="Yamashita H."/>
            <person name="Murakawa K."/>
            <person name="Fujimori K."/>
            <person name="Tanai H."/>
            <person name="Kimata M."/>
            <person name="Watanabe M."/>
            <person name="Hiraoka S."/>
            <person name="Chiba Y."/>
            <person name="Ishida S."/>
            <person name="Ono Y."/>
            <person name="Takiguchi S."/>
            <person name="Watanabe S."/>
            <person name="Yosida M."/>
            <person name="Hotuta T."/>
            <person name="Kusano J."/>
            <person name="Kanehori K."/>
            <person name="Takahashi-Fujii A."/>
            <person name="Hara H."/>
            <person name="Tanase T.-O."/>
            <person name="Nomura Y."/>
            <person name="Togiya S."/>
            <person name="Komai F."/>
            <person name="Hara R."/>
            <person name="Takeuchi K."/>
            <person name="Arita M."/>
            <person name="Imose N."/>
            <person name="Musashino K."/>
            <person name="Yuuki H."/>
            <person name="Oshima A."/>
            <person name="Sasaki N."/>
            <person name="Aotsuka S."/>
            <person name="Yoshikawa Y."/>
            <person name="Matsunawa H."/>
            <person name="Ichihara T."/>
            <person name="Shiohata N."/>
            <person name="Sano S."/>
            <person name="Moriya S."/>
            <person name="Momiyama H."/>
            <person name="Satoh N."/>
            <person name="Takami S."/>
            <person name="Terashima Y."/>
            <person name="Suzuki O."/>
            <person name="Nakagawa S."/>
            <person name="Senoh A."/>
            <person name="Mizoguchi H."/>
            <person name="Goto Y."/>
            <person name="Shimizu F."/>
            <person name="Wakebe H."/>
            <person name="Hishigaki H."/>
            <person name="Watanabe T."/>
            <person name="Sugiyama A."/>
            <person name="Takemoto M."/>
            <person name="Kawakami B."/>
            <person name="Yamazaki M."/>
            <person name="Watanabe K."/>
            <person name="Kumagai A."/>
            <person name="Itakura S."/>
            <person name="Fukuzumi Y."/>
            <person name="Fujimori Y."/>
            <person name="Komiyama M."/>
            <person name="Tashiro H."/>
            <person name="Tanigami A."/>
            <person name="Fujiwara T."/>
            <person name="Ono T."/>
            <person name="Yamada K."/>
            <person name="Fujii Y."/>
            <person name="Ozaki K."/>
            <person name="Hirao M."/>
            <person name="Ohmori Y."/>
            <person name="Kawabata A."/>
            <person name="Hikiji T."/>
            <person name="Kobatake N."/>
            <person name="Inagaki H."/>
            <person name="Ikema Y."/>
            <person name="Okamoto S."/>
            <person name="Okitani R."/>
            <person name="Kawakami T."/>
            <person name="Noguchi S."/>
            <person name="Itoh T."/>
            <person name="Shigeta K."/>
            <person name="Senba T."/>
            <person name="Matsumura K."/>
            <person name="Nakajima Y."/>
            <person name="Mizuno T."/>
            <person name="Morinaga M."/>
            <person name="Sasaki M."/>
            <person name="Togashi T."/>
            <person name="Oyama M."/>
            <person name="Hata H."/>
            <person name="Watanabe M."/>
            <person name="Komatsu T."/>
            <person name="Mizushima-Sugano J."/>
            <person name="Satoh T."/>
            <person name="Shirai Y."/>
            <person name="Takahashi Y."/>
            <person name="Nakagawa K."/>
            <person name="Okumura K."/>
            <person name="Nagase T."/>
            <person name="Nomura N."/>
            <person name="Kikuchi H."/>
            <person name="Masuho Y."/>
            <person name="Yamashita R."/>
            <person name="Nakai K."/>
            <person name="Yada T."/>
            <person name="Nakamura Y."/>
            <person name="Ohara O."/>
            <person name="Isogai T."/>
            <person name="Sugano S."/>
        </authorList>
    </citation>
    <scope>NUCLEOTIDE SEQUENCE [LARGE SCALE MRNA] (ISOFORMS 2 AND 3)</scope>
    <source>
        <tissue>Amygdala</tissue>
        <tissue>Caudate nucleus</tissue>
    </source>
</reference>
<reference key="3">
    <citation type="journal article" date="2003" name="Nature">
        <title>The DNA sequence and analysis of human chromosome 14.</title>
        <authorList>
            <person name="Heilig R."/>
            <person name="Eckenberg R."/>
            <person name="Petit J.-L."/>
            <person name="Fonknechten N."/>
            <person name="Da Silva C."/>
            <person name="Cattolico L."/>
            <person name="Levy M."/>
            <person name="Barbe V."/>
            <person name="De Berardinis V."/>
            <person name="Ureta-Vidal A."/>
            <person name="Pelletier E."/>
            <person name="Vico V."/>
            <person name="Anthouard V."/>
            <person name="Rowen L."/>
            <person name="Madan A."/>
            <person name="Qin S."/>
            <person name="Sun H."/>
            <person name="Du H."/>
            <person name="Pepin K."/>
            <person name="Artiguenave F."/>
            <person name="Robert C."/>
            <person name="Cruaud C."/>
            <person name="Bruels T."/>
            <person name="Jaillon O."/>
            <person name="Friedlander L."/>
            <person name="Samson G."/>
            <person name="Brottier P."/>
            <person name="Cure S."/>
            <person name="Segurens B."/>
            <person name="Aniere F."/>
            <person name="Samain S."/>
            <person name="Crespeau H."/>
            <person name="Abbasi N."/>
            <person name="Aiach N."/>
            <person name="Boscus D."/>
            <person name="Dickhoff R."/>
            <person name="Dors M."/>
            <person name="Dubois I."/>
            <person name="Friedman C."/>
            <person name="Gouyvenoux M."/>
            <person name="James R."/>
            <person name="Madan A."/>
            <person name="Mairey-Estrada B."/>
            <person name="Mangenot S."/>
            <person name="Martins N."/>
            <person name="Menard M."/>
            <person name="Oztas S."/>
            <person name="Ratcliffe A."/>
            <person name="Shaffer T."/>
            <person name="Trask B."/>
            <person name="Vacherie B."/>
            <person name="Bellemere C."/>
            <person name="Belser C."/>
            <person name="Besnard-Gonnet M."/>
            <person name="Bartol-Mavel D."/>
            <person name="Boutard M."/>
            <person name="Briez-Silla S."/>
            <person name="Combette S."/>
            <person name="Dufosse-Laurent V."/>
            <person name="Ferron C."/>
            <person name="Lechaplais C."/>
            <person name="Louesse C."/>
            <person name="Muselet D."/>
            <person name="Magdelenat G."/>
            <person name="Pateau E."/>
            <person name="Petit E."/>
            <person name="Sirvain-Trukniewicz P."/>
            <person name="Trybou A."/>
            <person name="Vega-Czarny N."/>
            <person name="Bataille E."/>
            <person name="Bluet E."/>
            <person name="Bordelais I."/>
            <person name="Dubois M."/>
            <person name="Dumont C."/>
            <person name="Guerin T."/>
            <person name="Haffray S."/>
            <person name="Hammadi R."/>
            <person name="Muanga J."/>
            <person name="Pellouin V."/>
            <person name="Robert D."/>
            <person name="Wunderle E."/>
            <person name="Gauguet G."/>
            <person name="Roy A."/>
            <person name="Sainte-Marthe L."/>
            <person name="Verdier J."/>
            <person name="Verdier-Discala C."/>
            <person name="Hillier L.W."/>
            <person name="Fulton L."/>
            <person name="McPherson J."/>
            <person name="Matsuda F."/>
            <person name="Wilson R."/>
            <person name="Scarpelli C."/>
            <person name="Gyapay G."/>
            <person name="Wincker P."/>
            <person name="Saurin W."/>
            <person name="Quetier F."/>
            <person name="Waterston R."/>
            <person name="Hood L."/>
            <person name="Weissenbach J."/>
        </authorList>
    </citation>
    <scope>NUCLEOTIDE SEQUENCE [LARGE SCALE GENOMIC DNA]</scope>
</reference>
<reference key="4">
    <citation type="journal article" date="2004" name="Genome Res.">
        <title>The status, quality, and expansion of the NIH full-length cDNA project: the Mammalian Gene Collection (MGC).</title>
        <authorList>
            <consortium name="The MGC Project Team"/>
        </authorList>
    </citation>
    <scope>NUCLEOTIDE SEQUENCE [LARGE SCALE MRNA] (ISOFORM 1)</scope>
    <source>
        <tissue>Brain</tissue>
    </source>
</reference>
<reference key="5">
    <citation type="journal article" date="2002" name="J. Biol. Chem.">
        <title>Metabolism of 4 beta -hydroxycholesterol in humans.</title>
        <authorList>
            <person name="Bodin K."/>
            <person name="Andersson U."/>
            <person name="Rystedt E."/>
            <person name="Ellis E."/>
            <person name="Norlin M."/>
            <person name="Pikuleva I."/>
            <person name="Eggertsen G."/>
            <person name="Bjoerkhem I."/>
            <person name="Diczfalusy U."/>
        </authorList>
    </citation>
    <scope>FUNCTION</scope>
    <scope>CATALYTIC ACTIVITY</scope>
</reference>
<reference key="6">
    <citation type="journal article" date="2003" name="Biochemistry">
        <title>Broad substrate specificity of human cytochrome P450 46A1 which initiates cholesterol degradation in the brain.</title>
        <authorList>
            <person name="Mast N."/>
            <person name="Norcross R."/>
            <person name="Andersson U."/>
            <person name="Shou M."/>
            <person name="Nakayama K."/>
            <person name="Bjoerkhem I."/>
            <person name="Pikuleva I.A."/>
        </authorList>
    </citation>
    <scope>CHARACTERIZATION</scope>
    <scope>BIOPHYSICOCHEMICAL PROPERTIES</scope>
    <scope>FUNCTION</scope>
    <scope>CATALYTIC ACTIVITY</scope>
    <scope>PATHWAY</scope>
</reference>
<reference key="7">
    <citation type="journal article" date="2014" name="J. Lipid Res.">
        <title>Oxidation of 7-dehydrocholesterol and desmosterol by human cytochrome P450 46A1.</title>
        <authorList>
            <person name="Goyal S."/>
            <person name="Xiao Y."/>
            <person name="Porter N.A."/>
            <person name="Xu L."/>
            <person name="Guengerich F.P."/>
        </authorList>
    </citation>
    <scope>FUNCTION</scope>
    <scope>CATALYTIC ACTIVITY</scope>
    <scope>BIOPHYSICOCHEMICAL PROPERTIES</scope>
</reference>
<reference key="8">
    <citation type="journal article" date="2017" name="J. Biol. Chem.">
        <title>Cytochrome P450 27A1 Deficiency and Regional Differences in Brain Sterol Metabolism Cause Preferential Cholestanol Accumulation in the Cerebellum.</title>
        <authorList>
            <person name="Mast N."/>
            <person name="Anderson K.W."/>
            <person name="Lin J.B."/>
            <person name="Li Y."/>
            <person name="Turko I.V."/>
            <person name="Tatsuoka C."/>
            <person name="Bjorkhem I."/>
            <person name="Pikuleva I.A."/>
        </authorList>
    </citation>
    <scope>FUNCTION</scope>
    <scope>CATALYTIC ACTIVITY</scope>
</reference>
<reference key="9">
    <citation type="journal article" date="2008" name="Proc. Natl. Acad. Sci. U.S.A.">
        <title>Crystal structures of substrate-bound and substrate-free cytochrome P450 46A1, the principal cholesterol hydroxylase in the brain.</title>
        <authorList>
            <person name="Mast N."/>
            <person name="White M.A."/>
            <person name="Bjorkhem I."/>
            <person name="Johnson E.F."/>
            <person name="Stout C.D."/>
            <person name="Pikuleva I.A."/>
        </authorList>
    </citation>
    <scope>X-RAY CRYSTALLOGRAPHY (1.90 ANGSTROMS) OF 51-500 IN COMPLEX WITH HEME AND CHOLESTEROL 3-SULFATE</scope>
    <scope>CATALYTIC ACTIVITY</scope>
    <scope>FUNCTION</scope>
    <scope>COFACTOR</scope>
</reference>
<reference key="10">
    <citation type="journal article" date="2010" name="J. Biol. Chem.">
        <title>Structural basis of drug binding to CYP46A1, an enzyme that controls cholesterol turnover in the brain.</title>
        <authorList>
            <person name="Mast N."/>
            <person name="Charvet C."/>
            <person name="Pikuleva I.A."/>
            <person name="Stout C.D."/>
        </authorList>
    </citation>
    <scope>X-RAY CRYSTALLOGRAPHY (1.6 ANGSTROMS) OF 51-500 IN COMPLEXES WITH HEME AND INHIBITORS</scope>
    <scope>FUNCTION</scope>
    <scope>COFACTOR</scope>
</reference>
<reference key="11">
    <citation type="journal article" date="2013" name="J. Biol. Chem.">
        <title>Binding of a cyano- and fluoro-containing drug bicalutamide to cytochrome P450 46A1: unusual features and spectral response.</title>
        <authorList>
            <person name="Mast N."/>
            <person name="Zheng W."/>
            <person name="Stout C.D."/>
            <person name="Pikuleva I.A."/>
        </authorList>
    </citation>
    <scope>X-RAY CRYSTALLOGRAPHY (2.1 ANGSTROMS) OF 51-500 IN COMPLEXES WITH HEME AND THE INHIBITOR BICALUTAMIDE</scope>
    <scope>COFACTOR</scope>
</reference>
<name>CP46A_HUMAN</name>
<feature type="chain" id="PRO_0000051994" description="Cholesterol 24-hydroxylase">
    <location>
        <begin position="1"/>
        <end position="500"/>
    </location>
</feature>
<feature type="transmembrane region" description="Helical" evidence="2">
    <location>
        <begin position="3"/>
        <end position="23"/>
    </location>
</feature>
<feature type="binding site" description="axial binding residue" evidence="6 7 8 18 19 20 21 22 23 24 25">
    <location>
        <position position="437"/>
    </location>
    <ligand>
        <name>heme</name>
        <dbReference type="ChEBI" id="CHEBI:30413"/>
    </ligand>
    <ligandPart>
        <name>Fe</name>
        <dbReference type="ChEBI" id="CHEBI:18248"/>
    </ligandPart>
</feature>
<feature type="splice variant" id="VSP_053858" description="In isoform 3." evidence="13">
    <location>
        <begin position="1"/>
        <end position="153"/>
    </location>
</feature>
<feature type="splice variant" id="VSP_053859" description="In isoform 2." evidence="13">
    <location>
        <begin position="1"/>
        <end position="97"/>
    </location>
</feature>
<feature type="splice variant" id="VSP_053860" description="In isoform 3." evidence="13">
    <location>
        <begin position="383"/>
        <end position="392"/>
    </location>
</feature>
<feature type="turn" evidence="28">
    <location>
        <begin position="29"/>
        <end position="32"/>
    </location>
</feature>
<feature type="helix" evidence="28">
    <location>
        <begin position="60"/>
        <end position="71"/>
    </location>
</feature>
<feature type="strand" evidence="28">
    <location>
        <begin position="73"/>
        <end position="79"/>
    </location>
</feature>
<feature type="strand" evidence="28">
    <location>
        <begin position="82"/>
        <end position="87"/>
    </location>
</feature>
<feature type="helix" evidence="28">
    <location>
        <begin position="90"/>
        <end position="97"/>
    </location>
</feature>
<feature type="helix" evidence="28">
    <location>
        <begin position="106"/>
        <end position="109"/>
    </location>
</feature>
<feature type="helix" evidence="28">
    <location>
        <begin position="110"/>
        <end position="113"/>
    </location>
</feature>
<feature type="strand" evidence="28">
    <location>
        <begin position="118"/>
        <end position="121"/>
    </location>
</feature>
<feature type="turn" evidence="28">
    <location>
        <begin position="125"/>
        <end position="127"/>
    </location>
</feature>
<feature type="helix" evidence="28">
    <location>
        <begin position="131"/>
        <end position="141"/>
    </location>
</feature>
<feature type="helix" evidence="28">
    <location>
        <begin position="142"/>
        <end position="145"/>
    </location>
</feature>
<feature type="helix" evidence="28">
    <location>
        <begin position="147"/>
        <end position="151"/>
    </location>
</feature>
<feature type="helix" evidence="28">
    <location>
        <begin position="154"/>
        <end position="169"/>
    </location>
</feature>
<feature type="strand" evidence="28">
    <location>
        <begin position="173"/>
        <end position="176"/>
    </location>
</feature>
<feature type="helix" evidence="28">
    <location>
        <begin position="180"/>
        <end position="197"/>
    </location>
</feature>
<feature type="helix" evidence="28">
    <location>
        <begin position="203"/>
        <end position="205"/>
    </location>
</feature>
<feature type="helix" evidence="28">
    <location>
        <begin position="209"/>
        <end position="226"/>
    </location>
</feature>
<feature type="turn" evidence="26">
    <location>
        <begin position="227"/>
        <end position="229"/>
    </location>
</feature>
<feature type="helix" evidence="27">
    <location>
        <begin position="230"/>
        <end position="232"/>
    </location>
</feature>
<feature type="helix" evidence="27">
    <location>
        <begin position="234"/>
        <end position="236"/>
    </location>
</feature>
<feature type="helix" evidence="28">
    <location>
        <begin position="237"/>
        <end position="266"/>
    </location>
</feature>
<feature type="helix" evidence="28">
    <location>
        <begin position="275"/>
        <end position="282"/>
    </location>
</feature>
<feature type="turn" evidence="28">
    <location>
        <begin position="283"/>
        <end position="285"/>
    </location>
</feature>
<feature type="strand" evidence="28">
    <location>
        <begin position="287"/>
        <end position="289"/>
    </location>
</feature>
<feature type="helix" evidence="28">
    <location>
        <begin position="290"/>
        <end position="318"/>
    </location>
</feature>
<feature type="helix" evidence="28">
    <location>
        <begin position="322"/>
        <end position="335"/>
    </location>
</feature>
<feature type="turn" evidence="28">
    <location>
        <begin position="336"/>
        <end position="338"/>
    </location>
</feature>
<feature type="helix" evidence="28">
    <location>
        <begin position="344"/>
        <end position="349"/>
    </location>
</feature>
<feature type="helix" evidence="28">
    <location>
        <begin position="351"/>
        <end position="363"/>
    </location>
</feature>
<feature type="strand" evidence="28">
    <location>
        <begin position="369"/>
        <end position="374"/>
    </location>
</feature>
<feature type="strand" evidence="28">
    <location>
        <begin position="378"/>
        <end position="380"/>
    </location>
</feature>
<feature type="strand" evidence="28">
    <location>
        <begin position="383"/>
        <end position="385"/>
    </location>
</feature>
<feature type="strand" evidence="28">
    <location>
        <begin position="387"/>
        <end position="394"/>
    </location>
</feature>
<feature type="helix" evidence="28">
    <location>
        <begin position="395"/>
        <end position="399"/>
    </location>
</feature>
<feature type="turn" evidence="28">
    <location>
        <begin position="402"/>
        <end position="404"/>
    </location>
</feature>
<feature type="strand" evidence="28">
    <location>
        <begin position="405"/>
        <end position="407"/>
    </location>
</feature>
<feature type="helix" evidence="28">
    <location>
        <begin position="413"/>
        <end position="416"/>
    </location>
</feature>
<feature type="strand" evidence="28">
    <location>
        <begin position="424"/>
        <end position="426"/>
    </location>
</feature>
<feature type="helix" evidence="27">
    <location>
        <begin position="433"/>
        <end position="435"/>
    </location>
</feature>
<feature type="helix" evidence="28">
    <location>
        <begin position="440"/>
        <end position="457"/>
    </location>
</feature>
<feature type="strand" evidence="28">
    <location>
        <begin position="458"/>
        <end position="462"/>
    </location>
</feature>
<feature type="strand" evidence="28">
    <location>
        <begin position="470"/>
        <end position="480"/>
    </location>
</feature>
<feature type="strand" evidence="28">
    <location>
        <begin position="483"/>
        <end position="488"/>
    </location>
</feature>
<evidence type="ECO:0000250" key="1">
    <source>
        <dbReference type="UniProtKB" id="Q9WVK8"/>
    </source>
</evidence>
<evidence type="ECO:0000255" key="2"/>
<evidence type="ECO:0000269" key="3">
    <source>
    </source>
</evidence>
<evidence type="ECO:0000269" key="4">
    <source>
    </source>
</evidence>
<evidence type="ECO:0000269" key="5">
    <source>
    </source>
</evidence>
<evidence type="ECO:0000269" key="6">
    <source>
    </source>
</evidence>
<evidence type="ECO:0000269" key="7">
    <source>
    </source>
</evidence>
<evidence type="ECO:0000269" key="8">
    <source>
    </source>
</evidence>
<evidence type="ECO:0000269" key="9">
    <source>
    </source>
</evidence>
<evidence type="ECO:0000269" key="10">
    <source>
    </source>
</evidence>
<evidence type="ECO:0000303" key="11">
    <source>
    </source>
</evidence>
<evidence type="ECO:0000303" key="12">
    <source>
    </source>
</evidence>
<evidence type="ECO:0000303" key="13">
    <source>
    </source>
</evidence>
<evidence type="ECO:0000303" key="14">
    <source>
    </source>
</evidence>
<evidence type="ECO:0000305" key="15"/>
<evidence type="ECO:0000305" key="16">
    <source>
    </source>
</evidence>
<evidence type="ECO:0000312" key="17">
    <source>
        <dbReference type="HGNC" id="HGNC:2641"/>
    </source>
</evidence>
<evidence type="ECO:0007744" key="18">
    <source>
        <dbReference type="PDB" id="2Q9F"/>
    </source>
</evidence>
<evidence type="ECO:0007744" key="19">
    <source>
        <dbReference type="PDB" id="2Q9G"/>
    </source>
</evidence>
<evidence type="ECO:0007744" key="20">
    <source>
        <dbReference type="PDB" id="3MDR"/>
    </source>
</evidence>
<evidence type="ECO:0007744" key="21">
    <source>
        <dbReference type="PDB" id="3MDT"/>
    </source>
</evidence>
<evidence type="ECO:0007744" key="22">
    <source>
        <dbReference type="PDB" id="3MDV"/>
    </source>
</evidence>
<evidence type="ECO:0007744" key="23">
    <source>
        <dbReference type="PDB" id="4ENH"/>
    </source>
</evidence>
<evidence type="ECO:0007744" key="24">
    <source>
        <dbReference type="PDB" id="4FIA"/>
    </source>
</evidence>
<evidence type="ECO:0007744" key="25">
    <source>
        <dbReference type="PDB" id="4J14"/>
    </source>
</evidence>
<evidence type="ECO:0007829" key="26">
    <source>
        <dbReference type="PDB" id="2Q9F"/>
    </source>
</evidence>
<evidence type="ECO:0007829" key="27">
    <source>
        <dbReference type="PDB" id="3MDM"/>
    </source>
</evidence>
<evidence type="ECO:0007829" key="28">
    <source>
        <dbReference type="PDB" id="7N6F"/>
    </source>
</evidence>
<accession>Q9Y6A2</accession>
<accession>B4DHP8</accession>
<accession>E7EQG9</accession>
<accession>Q8N2B0</accession>
<protein>
    <recommendedName>
        <fullName evidence="16">Cholesterol 24-hydroxylase</fullName>
        <shortName>CH24H</shortName>
        <ecNumber evidence="3 5 9">1.14.14.25</ecNumber>
    </recommendedName>
    <alternativeName>
        <fullName>Cholesterol 24-monooxygenase</fullName>
    </alternativeName>
    <alternativeName>
        <fullName evidence="11">Cholesterol 24S-hydroxylase</fullName>
    </alternativeName>
    <alternativeName>
        <fullName evidence="12">Cytochrome P450 46A1</fullName>
    </alternativeName>
</protein>
<dbReference type="EC" id="1.14.14.25" evidence="3 5 9"/>
<dbReference type="EMBL" id="AF094480">
    <property type="protein sequence ID" value="AAD41244.1"/>
    <property type="molecule type" value="mRNA"/>
</dbReference>
<dbReference type="EMBL" id="AK090886">
    <property type="protein sequence ID" value="BAC03539.1"/>
    <property type="molecule type" value="mRNA"/>
</dbReference>
<dbReference type="EMBL" id="AK295216">
    <property type="protein sequence ID" value="BAG58210.1"/>
    <property type="molecule type" value="mRNA"/>
</dbReference>
<dbReference type="EMBL" id="AL136000">
    <property type="status" value="NOT_ANNOTATED_CDS"/>
    <property type="molecule type" value="Genomic_DNA"/>
</dbReference>
<dbReference type="EMBL" id="AL160313">
    <property type="status" value="NOT_ANNOTATED_CDS"/>
    <property type="molecule type" value="Genomic_DNA"/>
</dbReference>
<dbReference type="EMBL" id="BC022539">
    <property type="protein sequence ID" value="AAH22539.1"/>
    <property type="molecule type" value="mRNA"/>
</dbReference>
<dbReference type="CCDS" id="CCDS9954.1">
    <molecule id="Q9Y6A2-1"/>
</dbReference>
<dbReference type="RefSeq" id="NP_006659.1">
    <molecule id="Q9Y6A2-1"/>
    <property type="nucleotide sequence ID" value="NM_006668.2"/>
</dbReference>
<dbReference type="PDB" id="2Q9F">
    <property type="method" value="X-ray"/>
    <property type="resolution" value="1.90 A"/>
    <property type="chains" value="A=51-500"/>
</dbReference>
<dbReference type="PDB" id="2Q9G">
    <property type="method" value="X-ray"/>
    <property type="resolution" value="2.40 A"/>
    <property type="chains" value="A=51-500"/>
</dbReference>
<dbReference type="PDB" id="3MDM">
    <property type="method" value="X-ray"/>
    <property type="resolution" value="1.60 A"/>
    <property type="chains" value="A=51-500"/>
</dbReference>
<dbReference type="PDB" id="3MDR">
    <property type="method" value="X-ray"/>
    <property type="resolution" value="2.00 A"/>
    <property type="chains" value="A/B=51-500"/>
</dbReference>
<dbReference type="PDB" id="3MDT">
    <property type="method" value="X-ray"/>
    <property type="resolution" value="2.30 A"/>
    <property type="chains" value="A/B=51-500"/>
</dbReference>
<dbReference type="PDB" id="3MDV">
    <property type="method" value="X-ray"/>
    <property type="resolution" value="2.40 A"/>
    <property type="chains" value="A/B=51-500"/>
</dbReference>
<dbReference type="PDB" id="4ENH">
    <property type="method" value="X-ray"/>
    <property type="resolution" value="2.50 A"/>
    <property type="chains" value="A=51-500"/>
</dbReference>
<dbReference type="PDB" id="4FIA">
    <property type="method" value="X-ray"/>
    <property type="resolution" value="2.10 A"/>
    <property type="chains" value="A=51-500"/>
</dbReference>
<dbReference type="PDB" id="4J14">
    <property type="method" value="X-ray"/>
    <property type="resolution" value="2.50 A"/>
    <property type="chains" value="A=51-500"/>
</dbReference>
<dbReference type="PDB" id="7LRL">
    <property type="method" value="X-ray"/>
    <property type="resolution" value="2.00 A"/>
    <property type="chains" value="A=28-494"/>
</dbReference>
<dbReference type="PDB" id="7LS3">
    <property type="method" value="X-ray"/>
    <property type="resolution" value="2.15 A"/>
    <property type="chains" value="A=28-494"/>
</dbReference>
<dbReference type="PDB" id="7LS4">
    <property type="method" value="X-ray"/>
    <property type="resolution" value="2.05 A"/>
    <property type="chains" value="A=28-494"/>
</dbReference>
<dbReference type="PDB" id="7N3L">
    <property type="method" value="X-ray"/>
    <property type="resolution" value="1.63 A"/>
    <property type="chains" value="A=28-494"/>
</dbReference>
<dbReference type="PDB" id="7N3M">
    <property type="method" value="X-ray"/>
    <property type="resolution" value="1.70 A"/>
    <property type="chains" value="AAA=28-494"/>
</dbReference>
<dbReference type="PDB" id="7N6F">
    <property type="method" value="X-ray"/>
    <property type="resolution" value="1.40 A"/>
    <property type="chains" value="A=28-494"/>
</dbReference>
<dbReference type="PDBsum" id="2Q9F"/>
<dbReference type="PDBsum" id="2Q9G"/>
<dbReference type="PDBsum" id="3MDM"/>
<dbReference type="PDBsum" id="3MDR"/>
<dbReference type="PDBsum" id="3MDT"/>
<dbReference type="PDBsum" id="3MDV"/>
<dbReference type="PDBsum" id="4ENH"/>
<dbReference type="PDBsum" id="4FIA"/>
<dbReference type="PDBsum" id="4J14"/>
<dbReference type="PDBsum" id="7LRL"/>
<dbReference type="PDBsum" id="7LS3"/>
<dbReference type="PDBsum" id="7LS4"/>
<dbReference type="PDBsum" id="7N3L"/>
<dbReference type="PDBsum" id="7N3M"/>
<dbReference type="PDBsum" id="7N6F"/>
<dbReference type="SMR" id="Q9Y6A2"/>
<dbReference type="BioGRID" id="116069">
    <property type="interactions" value="4"/>
</dbReference>
<dbReference type="FunCoup" id="Q9Y6A2">
    <property type="interactions" value="195"/>
</dbReference>
<dbReference type="IntAct" id="Q9Y6A2">
    <property type="interactions" value="1"/>
</dbReference>
<dbReference type="STRING" id="9606.ENSP00000261835"/>
<dbReference type="BindingDB" id="Q9Y6A2"/>
<dbReference type="ChEMBL" id="CHEMBL4523510"/>
<dbReference type="DrugBank" id="DB16987">
    <property type="generic name" value="Soticlestat"/>
</dbReference>
<dbReference type="DrugCentral" id="Q9Y6A2"/>
<dbReference type="GuidetoPHARMACOLOGY" id="1373"/>
<dbReference type="SwissLipids" id="SLP:000001220">
    <molecule id="Q9Y6A2-1"/>
</dbReference>
<dbReference type="SwissLipids" id="SLP:000001720"/>
<dbReference type="GlyGen" id="Q9Y6A2">
    <property type="glycosylation" value="2 sites, 1 O-linked glycan (2 sites)"/>
</dbReference>
<dbReference type="iPTMnet" id="Q9Y6A2"/>
<dbReference type="PhosphoSitePlus" id="Q9Y6A2"/>
<dbReference type="BioMuta" id="CYP46A1"/>
<dbReference type="DMDM" id="12585217"/>
<dbReference type="jPOST" id="Q9Y6A2"/>
<dbReference type="MassIVE" id="Q9Y6A2"/>
<dbReference type="PaxDb" id="9606-ENSP00000261835"/>
<dbReference type="PeptideAtlas" id="Q9Y6A2"/>
<dbReference type="ProteomicsDB" id="4238"/>
<dbReference type="ProteomicsDB" id="71672"/>
<dbReference type="ProteomicsDB" id="86640">
    <molecule id="Q9Y6A2-1"/>
</dbReference>
<dbReference type="Antibodypedia" id="14316">
    <property type="antibodies" value="294 antibodies from 32 providers"/>
</dbReference>
<dbReference type="DNASU" id="10858"/>
<dbReference type="Ensembl" id="ENST00000261835.8">
    <molecule id="Q9Y6A2-1"/>
    <property type="protein sequence ID" value="ENSP00000261835.3"/>
    <property type="gene ID" value="ENSG00000036530.9"/>
</dbReference>
<dbReference type="Ensembl" id="ENST00000380228.6">
    <molecule id="Q9Y6A2-2"/>
    <property type="protein sequence ID" value="ENSP00000369577.3"/>
    <property type="gene ID" value="ENSG00000036530.9"/>
</dbReference>
<dbReference type="GeneID" id="10858"/>
<dbReference type="KEGG" id="hsa:10858"/>
<dbReference type="MANE-Select" id="ENST00000261835.8">
    <property type="protein sequence ID" value="ENSP00000261835.3"/>
    <property type="RefSeq nucleotide sequence ID" value="NM_006668.2"/>
    <property type="RefSeq protein sequence ID" value="NP_006659.1"/>
</dbReference>
<dbReference type="UCSC" id="uc001ygo.4">
    <molecule id="Q9Y6A2-1"/>
    <property type="organism name" value="human"/>
</dbReference>
<dbReference type="AGR" id="HGNC:2641"/>
<dbReference type="CTD" id="10858"/>
<dbReference type="DisGeNET" id="10858"/>
<dbReference type="GeneCards" id="CYP46A1"/>
<dbReference type="HGNC" id="HGNC:2641">
    <property type="gene designation" value="CYP46A1"/>
</dbReference>
<dbReference type="HPA" id="ENSG00000036530">
    <property type="expression patterns" value="Tissue enriched (brain)"/>
</dbReference>
<dbReference type="MIM" id="604087">
    <property type="type" value="gene"/>
</dbReference>
<dbReference type="neXtProt" id="NX_Q9Y6A2"/>
<dbReference type="OpenTargets" id="ENSG00000036530"/>
<dbReference type="PharmGKB" id="PA27117"/>
<dbReference type="VEuPathDB" id="HostDB:ENSG00000036530"/>
<dbReference type="eggNOG" id="KOG0157">
    <property type="taxonomic scope" value="Eukaryota"/>
</dbReference>
<dbReference type="GeneTree" id="ENSGT00940000156927"/>
<dbReference type="InParanoid" id="Q9Y6A2"/>
<dbReference type="OMA" id="WKHQRRT"/>
<dbReference type="OrthoDB" id="1470350at2759"/>
<dbReference type="PAN-GO" id="Q9Y6A2">
    <property type="GO annotations" value="3 GO annotations based on evolutionary models"/>
</dbReference>
<dbReference type="PhylomeDB" id="Q9Y6A2"/>
<dbReference type="TreeFam" id="TF352037"/>
<dbReference type="BRENDA" id="1.14.14.25">
    <property type="organism ID" value="2681"/>
</dbReference>
<dbReference type="PathwayCommons" id="Q9Y6A2"/>
<dbReference type="Reactome" id="R-HSA-193775">
    <property type="pathway name" value="Synthesis of bile acids and bile salts via 24-hydroxycholesterol"/>
</dbReference>
<dbReference type="Reactome" id="R-HSA-211976">
    <property type="pathway name" value="Endogenous sterols"/>
</dbReference>
<dbReference type="SABIO-RK" id="Q9Y6A2"/>
<dbReference type="SignaLink" id="Q9Y6A2"/>
<dbReference type="UniPathway" id="UPA00229"/>
<dbReference type="UniPathway" id="UPA01058"/>
<dbReference type="BioGRID-ORCS" id="10858">
    <property type="hits" value="5 hits in 1146 CRISPR screens"/>
</dbReference>
<dbReference type="ChiTaRS" id="CYP46A1">
    <property type="organism name" value="human"/>
</dbReference>
<dbReference type="EvolutionaryTrace" id="Q9Y6A2"/>
<dbReference type="GeneWiki" id="CYP46A1"/>
<dbReference type="GenomeRNAi" id="10858"/>
<dbReference type="Pharos" id="Q9Y6A2">
    <property type="development level" value="Tchem"/>
</dbReference>
<dbReference type="PRO" id="PR:Q9Y6A2"/>
<dbReference type="Proteomes" id="UP000005640">
    <property type="component" value="Chromosome 14"/>
</dbReference>
<dbReference type="RNAct" id="Q9Y6A2">
    <property type="molecule type" value="protein"/>
</dbReference>
<dbReference type="Bgee" id="ENSG00000036530">
    <property type="expression patterns" value="Expressed in middle temporal gyrus and 128 other cell types or tissues"/>
</dbReference>
<dbReference type="ExpressionAtlas" id="Q9Y6A2">
    <property type="expression patterns" value="baseline and differential"/>
</dbReference>
<dbReference type="GO" id="GO:0030425">
    <property type="term" value="C:dendrite"/>
    <property type="evidence" value="ECO:0000250"/>
    <property type="project" value="UniProtKB"/>
</dbReference>
<dbReference type="GO" id="GO:0005783">
    <property type="term" value="C:endoplasmic reticulum"/>
    <property type="evidence" value="ECO:0000304"/>
    <property type="project" value="ProtInc"/>
</dbReference>
<dbReference type="GO" id="GO:0005789">
    <property type="term" value="C:endoplasmic reticulum membrane"/>
    <property type="evidence" value="ECO:0000304"/>
    <property type="project" value="Reactome"/>
</dbReference>
<dbReference type="GO" id="GO:0098794">
    <property type="term" value="C:postsynapse"/>
    <property type="evidence" value="ECO:0000250"/>
    <property type="project" value="UniProtKB"/>
</dbReference>
<dbReference type="GO" id="GO:0098793">
    <property type="term" value="C:presynapse"/>
    <property type="evidence" value="ECO:0000250"/>
    <property type="project" value="UniProtKB"/>
</dbReference>
<dbReference type="GO" id="GO:0033781">
    <property type="term" value="F:cholesterol 24-hydroxylase activity"/>
    <property type="evidence" value="ECO:0000314"/>
    <property type="project" value="UniProtKB"/>
</dbReference>
<dbReference type="GO" id="GO:0020037">
    <property type="term" value="F:heme binding"/>
    <property type="evidence" value="ECO:0000314"/>
    <property type="project" value="UniProtKB"/>
</dbReference>
<dbReference type="GO" id="GO:0005506">
    <property type="term" value="F:iron ion binding"/>
    <property type="evidence" value="ECO:0007669"/>
    <property type="project" value="InterPro"/>
</dbReference>
<dbReference type="GO" id="GO:0008395">
    <property type="term" value="F:steroid hydroxylase activity"/>
    <property type="evidence" value="ECO:0000314"/>
    <property type="project" value="UniProtKB"/>
</dbReference>
<dbReference type="GO" id="GO:0062184">
    <property type="term" value="F:testosterone 16-beta-hydroxylase activity"/>
    <property type="evidence" value="ECO:0007669"/>
    <property type="project" value="RHEA"/>
</dbReference>
<dbReference type="GO" id="GO:0050649">
    <property type="term" value="F:testosterone 6-beta-hydroxylase activity"/>
    <property type="evidence" value="ECO:0007669"/>
    <property type="project" value="RHEA"/>
</dbReference>
<dbReference type="GO" id="GO:0006699">
    <property type="term" value="P:bile acid biosynthetic process"/>
    <property type="evidence" value="ECO:0000304"/>
    <property type="project" value="Reactome"/>
</dbReference>
<dbReference type="GO" id="GO:0006707">
    <property type="term" value="P:cholesterol catabolic process"/>
    <property type="evidence" value="ECO:0000314"/>
    <property type="project" value="UniProtKB"/>
</dbReference>
<dbReference type="GO" id="GO:0007399">
    <property type="term" value="P:nervous system development"/>
    <property type="evidence" value="ECO:0000304"/>
    <property type="project" value="ProtInc"/>
</dbReference>
<dbReference type="GO" id="GO:0042448">
    <property type="term" value="P:progesterone metabolic process"/>
    <property type="evidence" value="ECO:0000314"/>
    <property type="project" value="UniProtKB"/>
</dbReference>
<dbReference type="GO" id="GO:1903044">
    <property type="term" value="P:protein localization to membrane raft"/>
    <property type="evidence" value="ECO:0000250"/>
    <property type="project" value="ARUK-UCL"/>
</dbReference>
<dbReference type="GO" id="GO:1900271">
    <property type="term" value="P:regulation of long-term synaptic potentiation"/>
    <property type="evidence" value="ECO:0000250"/>
    <property type="project" value="UniProtKB"/>
</dbReference>
<dbReference type="GO" id="GO:0016125">
    <property type="term" value="P:sterol metabolic process"/>
    <property type="evidence" value="ECO:0000304"/>
    <property type="project" value="Reactome"/>
</dbReference>
<dbReference type="GO" id="GO:0006805">
    <property type="term" value="P:xenobiotic metabolic process"/>
    <property type="evidence" value="ECO:0000314"/>
    <property type="project" value="UniProtKB"/>
</dbReference>
<dbReference type="CDD" id="cd20613">
    <property type="entry name" value="CYP46A1-like"/>
    <property type="match status" value="1"/>
</dbReference>
<dbReference type="FunFam" id="1.10.630.10:FF:000031">
    <property type="entry name" value="cholesterol 24-hydroxylase isoform X2"/>
    <property type="match status" value="1"/>
</dbReference>
<dbReference type="Gene3D" id="1.10.630.10">
    <property type="entry name" value="Cytochrome P450"/>
    <property type="match status" value="1"/>
</dbReference>
<dbReference type="InterPro" id="IPR039983">
    <property type="entry name" value="CYP46A1"/>
</dbReference>
<dbReference type="InterPro" id="IPR001128">
    <property type="entry name" value="Cyt_P450"/>
</dbReference>
<dbReference type="InterPro" id="IPR017972">
    <property type="entry name" value="Cyt_P450_CS"/>
</dbReference>
<dbReference type="InterPro" id="IPR002401">
    <property type="entry name" value="Cyt_P450_E_grp-I"/>
</dbReference>
<dbReference type="InterPro" id="IPR036396">
    <property type="entry name" value="Cyt_P450_sf"/>
</dbReference>
<dbReference type="PANTHER" id="PTHR24293:SF1">
    <property type="entry name" value="CHOLESTEROL 24-HYDROXYLASE"/>
    <property type="match status" value="1"/>
</dbReference>
<dbReference type="PANTHER" id="PTHR24293">
    <property type="entry name" value="CYTOCHROME P450 FAMILY 46 SUBFAMILY A"/>
    <property type="match status" value="1"/>
</dbReference>
<dbReference type="Pfam" id="PF00067">
    <property type="entry name" value="p450"/>
    <property type="match status" value="1"/>
</dbReference>
<dbReference type="PRINTS" id="PR00463">
    <property type="entry name" value="EP450I"/>
</dbReference>
<dbReference type="PRINTS" id="PR00385">
    <property type="entry name" value="P450"/>
</dbReference>
<dbReference type="SUPFAM" id="SSF48264">
    <property type="entry name" value="Cytochrome P450"/>
    <property type="match status" value="1"/>
</dbReference>
<dbReference type="PROSITE" id="PS00086">
    <property type="entry name" value="CYTOCHROME_P450"/>
    <property type="match status" value="1"/>
</dbReference>
<proteinExistence type="evidence at protein level"/>